<accession>B2TWH4</accession>
<comment type="function">
    <text evidence="1">DNA-dependent RNA polymerase catalyzes the transcription of DNA into RNA using the four ribonucleoside triphosphates as substrates.</text>
</comment>
<comment type="catalytic activity">
    <reaction evidence="1">
        <text>RNA(n) + a ribonucleoside 5'-triphosphate = RNA(n+1) + diphosphate</text>
        <dbReference type="Rhea" id="RHEA:21248"/>
        <dbReference type="Rhea" id="RHEA-COMP:14527"/>
        <dbReference type="Rhea" id="RHEA-COMP:17342"/>
        <dbReference type="ChEBI" id="CHEBI:33019"/>
        <dbReference type="ChEBI" id="CHEBI:61557"/>
        <dbReference type="ChEBI" id="CHEBI:140395"/>
        <dbReference type="EC" id="2.7.7.6"/>
    </reaction>
</comment>
<comment type="cofactor">
    <cofactor evidence="1">
        <name>Mg(2+)</name>
        <dbReference type="ChEBI" id="CHEBI:18420"/>
    </cofactor>
    <text evidence="1">Binds 1 Mg(2+) ion per subunit.</text>
</comment>
<comment type="cofactor">
    <cofactor evidence="1">
        <name>Zn(2+)</name>
        <dbReference type="ChEBI" id="CHEBI:29105"/>
    </cofactor>
    <text evidence="1">Binds 2 Zn(2+) ions per subunit.</text>
</comment>
<comment type="subunit">
    <text evidence="1">The RNAP catalytic core consists of 2 alpha, 1 beta, 1 beta' and 1 omega subunit. When a sigma factor is associated with the core the holoenzyme is formed, which can initiate transcription.</text>
</comment>
<comment type="similarity">
    <text evidence="1">Belongs to the RNA polymerase beta' chain family.</text>
</comment>
<organism>
    <name type="scientific">Shigella boydii serotype 18 (strain CDC 3083-94 / BS512)</name>
    <dbReference type="NCBI Taxonomy" id="344609"/>
    <lineage>
        <taxon>Bacteria</taxon>
        <taxon>Pseudomonadati</taxon>
        <taxon>Pseudomonadota</taxon>
        <taxon>Gammaproteobacteria</taxon>
        <taxon>Enterobacterales</taxon>
        <taxon>Enterobacteriaceae</taxon>
        <taxon>Shigella</taxon>
    </lineage>
</organism>
<name>RPOC_SHIB3</name>
<sequence length="1407" mass="155186">MKDLLKFLKAQTKTEEFDAIKIALASPDMIRSWSFGEVKKPETINYRTFKPERDGLFCARIFGPVKDYECLCGKYKRLKHRGVICEKCGVEVTQTKVRRERMGHIELASPTAHIWFLKSLPSRIGLLLDMPLRDIERVLYFESYVVIEGGMTNLERQQILTEEQYLDALEEFGDEFDAKMGAEAIQALLKSMDLEQECEQLREELNETNSETKRKKLTKRIKLLEAFVQSGNKPEWMILTVLPVLPPDLRPLVPLDGGRFATSDLNDLYRRVINRNNRLKRLLDLAAPDIIVRNEKRMLQEAVDALLDNGRRGRAITGSNKRPLKSLADMIKGKQGRFRQNLLGKRVDYSGRSVITVGPYLRLHQCGLPKKMALELFKPFIYGKLELRGLATTIKAAKKMVEREEAVVWDILDEVIREHPVLLNRAPTLHRLGIQAFEPVLIEGKAIQLHPLVCAAYNADFDGDQMAVHVPLTLEAQLEARALMMSTNNILSPANGEPIIVPSQDVVLGLYYMTRDCVNAKGEGMVLTGPKEAERLYRSGLASLHARVKVRITEYEKDANGELVAKTSLKDTTVGRAILWMIVPKGLPYSIVNQALGKKAISKMLNTCYRILGLKPTVIFADQIMYTGFAYAARSGASVGIDDMVIPEKKHEIISEAEAEVAEIQEQFQSGLVTAGERYNKVIDIWAAANDRVSKAMMDNLQTETVINRDGQEEKQVSFNSIYMMADSGARGSAAQIRQLAGMRGLMAKPDGSIIETPITANFREGLNVLQYFISTHGARKGLADTALKTANSGYLTRRLVDVAQDLVVTEDDCGTHEGIMMTPVIEGGDVKEPLRDRVLGRVTAEDVLKPGTADILVPRNTLLHEQWCDLLEENSVDAVKVRSVVSCDTDFGVCAYCYGRDLARGHIINKGEAIGVIAAQSIGEPGTQLTMRTFHIGGAASRAAAESSIQVKNKGSIKLSNVKSVVNSSGKLVITSRNTELKLIDEFGRTKESYKVPYGAVLAKGDGEQVAGGETVANWDPHTMPVITEVSGFVRFTDMIDGQTITRQTDELTGLSSLVVLDSAERTAGGKDLRPALKIVDAQGNDVLIPGTDMPAQYFLPGKAIVQLEDGVQISSGDTLARIPQESGGTKDITGGLPRVADLFEARRPKEPAILAEISGIVSFGKETKGKRRLVITPVDGSDPYEEMIPKWRQLNVFEGERVERGDVISDGPEAPHDILRLRGVHAVTRYIVNEVQDVYRLQGVKINDKHIEVIVRQMLRKATIVNAGSSDFLEGEQVEYSRVKIANRELEANGKVGATYSRDLLGITKASLATESFISAASFQETTRVLTEAAVAGKRDELRGLKENVIVGRLIPAGTGYAYHQDRMRRRAAGEAPAAPQVTAEDASASLAELLNAGLGGSDNE</sequence>
<keyword id="KW-0007">Acetylation</keyword>
<keyword id="KW-0240">DNA-directed RNA polymerase</keyword>
<keyword id="KW-0460">Magnesium</keyword>
<keyword id="KW-0479">Metal-binding</keyword>
<keyword id="KW-0548">Nucleotidyltransferase</keyword>
<keyword id="KW-1185">Reference proteome</keyword>
<keyword id="KW-0804">Transcription</keyword>
<keyword id="KW-0808">Transferase</keyword>
<keyword id="KW-0862">Zinc</keyword>
<feature type="chain" id="PRO_0000353434" description="DNA-directed RNA polymerase subunit beta'">
    <location>
        <begin position="1"/>
        <end position="1407"/>
    </location>
</feature>
<feature type="binding site" evidence="1">
    <location>
        <position position="70"/>
    </location>
    <ligand>
        <name>Zn(2+)</name>
        <dbReference type="ChEBI" id="CHEBI:29105"/>
        <label>1</label>
    </ligand>
</feature>
<feature type="binding site" evidence="1">
    <location>
        <position position="72"/>
    </location>
    <ligand>
        <name>Zn(2+)</name>
        <dbReference type="ChEBI" id="CHEBI:29105"/>
        <label>1</label>
    </ligand>
</feature>
<feature type="binding site" evidence="1">
    <location>
        <position position="85"/>
    </location>
    <ligand>
        <name>Zn(2+)</name>
        <dbReference type="ChEBI" id="CHEBI:29105"/>
        <label>1</label>
    </ligand>
</feature>
<feature type="binding site" evidence="1">
    <location>
        <position position="88"/>
    </location>
    <ligand>
        <name>Zn(2+)</name>
        <dbReference type="ChEBI" id="CHEBI:29105"/>
        <label>1</label>
    </ligand>
</feature>
<feature type="binding site" evidence="1">
    <location>
        <position position="460"/>
    </location>
    <ligand>
        <name>Mg(2+)</name>
        <dbReference type="ChEBI" id="CHEBI:18420"/>
    </ligand>
</feature>
<feature type="binding site" evidence="1">
    <location>
        <position position="462"/>
    </location>
    <ligand>
        <name>Mg(2+)</name>
        <dbReference type="ChEBI" id="CHEBI:18420"/>
    </ligand>
</feature>
<feature type="binding site" evidence="1">
    <location>
        <position position="464"/>
    </location>
    <ligand>
        <name>Mg(2+)</name>
        <dbReference type="ChEBI" id="CHEBI:18420"/>
    </ligand>
</feature>
<feature type="binding site" evidence="1">
    <location>
        <position position="814"/>
    </location>
    <ligand>
        <name>Zn(2+)</name>
        <dbReference type="ChEBI" id="CHEBI:29105"/>
        <label>2</label>
    </ligand>
</feature>
<feature type="binding site" evidence="1">
    <location>
        <position position="888"/>
    </location>
    <ligand>
        <name>Zn(2+)</name>
        <dbReference type="ChEBI" id="CHEBI:29105"/>
        <label>2</label>
    </ligand>
</feature>
<feature type="binding site" evidence="1">
    <location>
        <position position="895"/>
    </location>
    <ligand>
        <name>Zn(2+)</name>
        <dbReference type="ChEBI" id="CHEBI:29105"/>
        <label>2</label>
    </ligand>
</feature>
<feature type="binding site" evidence="1">
    <location>
        <position position="898"/>
    </location>
    <ligand>
        <name>Zn(2+)</name>
        <dbReference type="ChEBI" id="CHEBI:29105"/>
        <label>2</label>
    </ligand>
</feature>
<feature type="modified residue" description="N6-acetyllysine" evidence="1">
    <location>
        <position position="972"/>
    </location>
</feature>
<protein>
    <recommendedName>
        <fullName evidence="1">DNA-directed RNA polymerase subunit beta'</fullName>
        <shortName evidence="1">RNAP subunit beta'</shortName>
        <ecNumber evidence="1">2.7.7.6</ecNumber>
    </recommendedName>
    <alternativeName>
        <fullName evidence="1">RNA polymerase subunit beta'</fullName>
    </alternativeName>
    <alternativeName>
        <fullName evidence="1">Transcriptase subunit beta'</fullName>
    </alternativeName>
</protein>
<evidence type="ECO:0000255" key="1">
    <source>
        <dbReference type="HAMAP-Rule" id="MF_01322"/>
    </source>
</evidence>
<reference key="1">
    <citation type="submission" date="2008-05" db="EMBL/GenBank/DDBJ databases">
        <title>Complete sequence of Shigella boydii serotype 18 strain BS512.</title>
        <authorList>
            <person name="Rasko D.A."/>
            <person name="Rosovitz M."/>
            <person name="Maurelli A.T."/>
            <person name="Myers G."/>
            <person name="Seshadri R."/>
            <person name="Cer R."/>
            <person name="Jiang L."/>
            <person name="Ravel J."/>
            <person name="Sebastian Y."/>
        </authorList>
    </citation>
    <scope>NUCLEOTIDE SEQUENCE [LARGE SCALE GENOMIC DNA]</scope>
    <source>
        <strain>CDC 3083-94 / BS512</strain>
    </source>
</reference>
<gene>
    <name evidence="1" type="primary">rpoC</name>
    <name type="ordered locus">SbBS512_E4476</name>
</gene>
<dbReference type="EC" id="2.7.7.6" evidence="1"/>
<dbReference type="EMBL" id="CP001063">
    <property type="protein sequence ID" value="ACD08075.1"/>
    <property type="molecule type" value="Genomic_DNA"/>
</dbReference>
<dbReference type="RefSeq" id="WP_000653949.1">
    <property type="nucleotide sequence ID" value="NC_010658.1"/>
</dbReference>
<dbReference type="SMR" id="B2TWH4"/>
<dbReference type="STRING" id="344609.SbBS512_E4476"/>
<dbReference type="KEGG" id="sbc:SbBS512_E4476"/>
<dbReference type="HOGENOM" id="CLU_000524_3_1_6"/>
<dbReference type="Proteomes" id="UP000001030">
    <property type="component" value="Chromosome"/>
</dbReference>
<dbReference type="GO" id="GO:0000428">
    <property type="term" value="C:DNA-directed RNA polymerase complex"/>
    <property type="evidence" value="ECO:0007669"/>
    <property type="project" value="UniProtKB-KW"/>
</dbReference>
<dbReference type="GO" id="GO:0003677">
    <property type="term" value="F:DNA binding"/>
    <property type="evidence" value="ECO:0007669"/>
    <property type="project" value="UniProtKB-UniRule"/>
</dbReference>
<dbReference type="GO" id="GO:0003899">
    <property type="term" value="F:DNA-directed RNA polymerase activity"/>
    <property type="evidence" value="ECO:0007669"/>
    <property type="project" value="UniProtKB-UniRule"/>
</dbReference>
<dbReference type="GO" id="GO:0000287">
    <property type="term" value="F:magnesium ion binding"/>
    <property type="evidence" value="ECO:0007669"/>
    <property type="project" value="UniProtKB-UniRule"/>
</dbReference>
<dbReference type="GO" id="GO:0008270">
    <property type="term" value="F:zinc ion binding"/>
    <property type="evidence" value="ECO:0007669"/>
    <property type="project" value="UniProtKB-UniRule"/>
</dbReference>
<dbReference type="GO" id="GO:0006351">
    <property type="term" value="P:DNA-templated transcription"/>
    <property type="evidence" value="ECO:0007669"/>
    <property type="project" value="UniProtKB-UniRule"/>
</dbReference>
<dbReference type="CDD" id="cd02655">
    <property type="entry name" value="RNAP_beta'_C"/>
    <property type="match status" value="1"/>
</dbReference>
<dbReference type="CDD" id="cd01609">
    <property type="entry name" value="RNAP_beta'_N"/>
    <property type="match status" value="1"/>
</dbReference>
<dbReference type="FunFam" id="1.10.132.30:FF:000003">
    <property type="entry name" value="DNA-directed RNA polymerase subunit beta"/>
    <property type="match status" value="1"/>
</dbReference>
<dbReference type="FunFam" id="1.10.150.390:FF:000002">
    <property type="entry name" value="DNA-directed RNA polymerase subunit beta"/>
    <property type="match status" value="1"/>
</dbReference>
<dbReference type="FunFam" id="1.10.274.100:FF:000002">
    <property type="entry name" value="DNA-directed RNA polymerase subunit beta"/>
    <property type="match status" value="1"/>
</dbReference>
<dbReference type="FunFam" id="1.10.40.90:FF:000001">
    <property type="entry name" value="DNA-directed RNA polymerase subunit beta"/>
    <property type="match status" value="1"/>
</dbReference>
<dbReference type="FunFam" id="2.40.50.100:FF:000012">
    <property type="entry name" value="DNA-directed RNA polymerase subunit beta"/>
    <property type="match status" value="1"/>
</dbReference>
<dbReference type="FunFam" id="2.40.50.100:FF:000016">
    <property type="entry name" value="DNA-directed RNA polymerase subunit beta"/>
    <property type="match status" value="1"/>
</dbReference>
<dbReference type="FunFam" id="2.40.50.100:FF:000019">
    <property type="entry name" value="DNA-directed RNA polymerase subunit beta"/>
    <property type="match status" value="1"/>
</dbReference>
<dbReference type="FunFam" id="4.10.860.120:FF:000001">
    <property type="entry name" value="DNA-directed RNA polymerase subunit beta"/>
    <property type="match status" value="1"/>
</dbReference>
<dbReference type="Gene3D" id="1.10.132.30">
    <property type="match status" value="1"/>
</dbReference>
<dbReference type="Gene3D" id="1.10.150.390">
    <property type="match status" value="1"/>
</dbReference>
<dbReference type="Gene3D" id="1.10.1790.20">
    <property type="match status" value="1"/>
</dbReference>
<dbReference type="Gene3D" id="1.10.40.90">
    <property type="match status" value="1"/>
</dbReference>
<dbReference type="Gene3D" id="2.40.40.20">
    <property type="match status" value="1"/>
</dbReference>
<dbReference type="Gene3D" id="2.40.50.100">
    <property type="match status" value="3"/>
</dbReference>
<dbReference type="Gene3D" id="4.10.860.120">
    <property type="entry name" value="RNA polymerase II, clamp domain"/>
    <property type="match status" value="1"/>
</dbReference>
<dbReference type="Gene3D" id="1.10.274.100">
    <property type="entry name" value="RNA polymerase Rpb1, domain 3"/>
    <property type="match status" value="1"/>
</dbReference>
<dbReference type="HAMAP" id="MF_01322">
    <property type="entry name" value="RNApol_bact_RpoC"/>
    <property type="match status" value="1"/>
</dbReference>
<dbReference type="InterPro" id="IPR045867">
    <property type="entry name" value="DNA-dir_RpoC_beta_prime"/>
</dbReference>
<dbReference type="InterPro" id="IPR012754">
    <property type="entry name" value="DNA-dir_RpoC_beta_prime_bact"/>
</dbReference>
<dbReference type="InterPro" id="IPR000722">
    <property type="entry name" value="RNA_pol_asu"/>
</dbReference>
<dbReference type="InterPro" id="IPR006592">
    <property type="entry name" value="RNA_pol_N"/>
</dbReference>
<dbReference type="InterPro" id="IPR007080">
    <property type="entry name" value="RNA_pol_Rpb1_1"/>
</dbReference>
<dbReference type="InterPro" id="IPR007066">
    <property type="entry name" value="RNA_pol_Rpb1_3"/>
</dbReference>
<dbReference type="InterPro" id="IPR042102">
    <property type="entry name" value="RNA_pol_Rpb1_3_sf"/>
</dbReference>
<dbReference type="InterPro" id="IPR007083">
    <property type="entry name" value="RNA_pol_Rpb1_4"/>
</dbReference>
<dbReference type="InterPro" id="IPR007081">
    <property type="entry name" value="RNA_pol_Rpb1_5"/>
</dbReference>
<dbReference type="InterPro" id="IPR044893">
    <property type="entry name" value="RNA_pol_Rpb1_clamp_domain"/>
</dbReference>
<dbReference type="InterPro" id="IPR038120">
    <property type="entry name" value="Rpb1_funnel_sf"/>
</dbReference>
<dbReference type="NCBIfam" id="TIGR02386">
    <property type="entry name" value="rpoC_TIGR"/>
    <property type="match status" value="1"/>
</dbReference>
<dbReference type="PANTHER" id="PTHR19376">
    <property type="entry name" value="DNA-DIRECTED RNA POLYMERASE"/>
    <property type="match status" value="1"/>
</dbReference>
<dbReference type="PANTHER" id="PTHR19376:SF54">
    <property type="entry name" value="DNA-DIRECTED RNA POLYMERASE SUBUNIT BETA"/>
    <property type="match status" value="1"/>
</dbReference>
<dbReference type="Pfam" id="PF04997">
    <property type="entry name" value="RNA_pol_Rpb1_1"/>
    <property type="match status" value="1"/>
</dbReference>
<dbReference type="Pfam" id="PF00623">
    <property type="entry name" value="RNA_pol_Rpb1_2"/>
    <property type="match status" value="2"/>
</dbReference>
<dbReference type="Pfam" id="PF04983">
    <property type="entry name" value="RNA_pol_Rpb1_3"/>
    <property type="match status" value="1"/>
</dbReference>
<dbReference type="Pfam" id="PF05000">
    <property type="entry name" value="RNA_pol_Rpb1_4"/>
    <property type="match status" value="1"/>
</dbReference>
<dbReference type="Pfam" id="PF04998">
    <property type="entry name" value="RNA_pol_Rpb1_5"/>
    <property type="match status" value="1"/>
</dbReference>
<dbReference type="SMART" id="SM00663">
    <property type="entry name" value="RPOLA_N"/>
    <property type="match status" value="1"/>
</dbReference>
<dbReference type="SUPFAM" id="SSF64484">
    <property type="entry name" value="beta and beta-prime subunits of DNA dependent RNA-polymerase"/>
    <property type="match status" value="1"/>
</dbReference>
<proteinExistence type="inferred from homology"/>